<gene>
    <name evidence="1" type="primary">thiG</name>
    <name type="ordered locus">BCI_0045</name>
</gene>
<reference key="1">
    <citation type="journal article" date="2006" name="PLoS Biol.">
        <title>Metabolic complementarity and genomics of the dual bacterial symbiosis of sharpshooters.</title>
        <authorList>
            <person name="Wu D."/>
            <person name="Daugherty S.C."/>
            <person name="Van Aken S.E."/>
            <person name="Pai G.H."/>
            <person name="Watkins K.L."/>
            <person name="Khouri H."/>
            <person name="Tallon L.J."/>
            <person name="Zaborsky J.M."/>
            <person name="Dunbar H.E."/>
            <person name="Tran P.L."/>
            <person name="Moran N.A."/>
            <person name="Eisen J.A."/>
        </authorList>
    </citation>
    <scope>NUCLEOTIDE SEQUENCE [LARGE SCALE GENOMIC DNA]</scope>
</reference>
<feature type="chain" id="PRO_1000025995" description="Thiazole synthase">
    <location>
        <begin position="1"/>
        <end position="259"/>
    </location>
</feature>
<feature type="active site" description="Schiff-base intermediate with DXP" evidence="1">
    <location>
        <position position="95"/>
    </location>
</feature>
<feature type="binding site" evidence="1">
    <location>
        <position position="156"/>
    </location>
    <ligand>
        <name>1-deoxy-D-xylulose 5-phosphate</name>
        <dbReference type="ChEBI" id="CHEBI:57792"/>
    </ligand>
</feature>
<feature type="binding site" evidence="1">
    <location>
        <begin position="182"/>
        <end position="183"/>
    </location>
    <ligand>
        <name>1-deoxy-D-xylulose 5-phosphate</name>
        <dbReference type="ChEBI" id="CHEBI:57792"/>
    </ligand>
</feature>
<feature type="binding site" evidence="1">
    <location>
        <begin position="204"/>
        <end position="205"/>
    </location>
    <ligand>
        <name>1-deoxy-D-xylulose 5-phosphate</name>
        <dbReference type="ChEBI" id="CHEBI:57792"/>
    </ligand>
</feature>
<accession>Q1LU41</accession>
<keyword id="KW-0963">Cytoplasm</keyword>
<keyword id="KW-1185">Reference proteome</keyword>
<keyword id="KW-0704">Schiff base</keyword>
<keyword id="KW-0784">Thiamine biosynthesis</keyword>
<keyword id="KW-0808">Transferase</keyword>
<comment type="function">
    <text evidence="1">Catalyzes the rearrangement of 1-deoxy-D-xylulose 5-phosphate (DXP) to produce the thiazole phosphate moiety of thiamine. Sulfur is provided by the thiocarboxylate moiety of the carrier protein ThiS. In vitro, sulfur can be provided by H(2)S.</text>
</comment>
<comment type="catalytic activity">
    <reaction evidence="1">
        <text>[ThiS sulfur-carrier protein]-C-terminal-Gly-aminoethanethioate + 2-iminoacetate + 1-deoxy-D-xylulose 5-phosphate = [ThiS sulfur-carrier protein]-C-terminal Gly-Gly + 2-[(2R,5Z)-2-carboxy-4-methylthiazol-5(2H)-ylidene]ethyl phosphate + 2 H2O + H(+)</text>
        <dbReference type="Rhea" id="RHEA:26297"/>
        <dbReference type="Rhea" id="RHEA-COMP:12909"/>
        <dbReference type="Rhea" id="RHEA-COMP:19908"/>
        <dbReference type="ChEBI" id="CHEBI:15377"/>
        <dbReference type="ChEBI" id="CHEBI:15378"/>
        <dbReference type="ChEBI" id="CHEBI:57792"/>
        <dbReference type="ChEBI" id="CHEBI:62899"/>
        <dbReference type="ChEBI" id="CHEBI:77846"/>
        <dbReference type="ChEBI" id="CHEBI:90778"/>
        <dbReference type="ChEBI" id="CHEBI:232372"/>
        <dbReference type="EC" id="2.8.1.10"/>
    </reaction>
</comment>
<comment type="pathway">
    <text evidence="1">Cofactor biosynthesis; thiamine diphosphate biosynthesis.</text>
</comment>
<comment type="subunit">
    <text evidence="1">Homotetramer. Forms heterodimers with either ThiH or ThiS.</text>
</comment>
<comment type="subcellular location">
    <subcellularLocation>
        <location evidence="1">Cytoplasm</location>
    </subcellularLocation>
</comment>
<comment type="similarity">
    <text evidence="1">Belongs to the ThiG family.</text>
</comment>
<sequence length="259" mass="27453">MFTLADISFRSRLLMGTGKFTTKEIMLQAITAAGSELVTLAMRRVDIKGGNDAILPTLRTAGVKLLPNTSGAKDADEALFVARLAREAIGTNWIKLEIHPDMQYLLPDPVETLKAASKLVKDGFVVLPYCSADPVLCRRLEEVGCAAVMPLGSPIGSNQGLKTKDFLQIIIEQTQVPVVVDAGIGAPSQALEALEMGADAVLVNTAIAVALDPVAMARAFSLALAAGDLAKSAGLAERRKYASATSPLTQFLSHYEVCK</sequence>
<name>THIG_BAUCH</name>
<dbReference type="EC" id="2.8.1.10" evidence="1"/>
<dbReference type="EMBL" id="CP000238">
    <property type="protein sequence ID" value="ABF14207.1"/>
    <property type="molecule type" value="Genomic_DNA"/>
</dbReference>
<dbReference type="RefSeq" id="WP_011520256.1">
    <property type="nucleotide sequence ID" value="NC_007984.1"/>
</dbReference>
<dbReference type="SMR" id="Q1LU41"/>
<dbReference type="STRING" id="374463.BCI_0045"/>
<dbReference type="KEGG" id="bci:BCI_0045"/>
<dbReference type="HOGENOM" id="CLU_062233_1_0_6"/>
<dbReference type="OrthoDB" id="9805935at2"/>
<dbReference type="UniPathway" id="UPA00060"/>
<dbReference type="Proteomes" id="UP000002427">
    <property type="component" value="Chromosome"/>
</dbReference>
<dbReference type="GO" id="GO:0005737">
    <property type="term" value="C:cytoplasm"/>
    <property type="evidence" value="ECO:0007669"/>
    <property type="project" value="UniProtKB-SubCell"/>
</dbReference>
<dbReference type="GO" id="GO:1990107">
    <property type="term" value="F:thiazole synthase activity"/>
    <property type="evidence" value="ECO:0007669"/>
    <property type="project" value="UniProtKB-EC"/>
</dbReference>
<dbReference type="GO" id="GO:0009229">
    <property type="term" value="P:thiamine diphosphate biosynthetic process"/>
    <property type="evidence" value="ECO:0007669"/>
    <property type="project" value="UniProtKB-UniRule"/>
</dbReference>
<dbReference type="CDD" id="cd04728">
    <property type="entry name" value="ThiG"/>
    <property type="match status" value="1"/>
</dbReference>
<dbReference type="FunFam" id="3.20.20.70:FF:000049">
    <property type="entry name" value="Thiazole synthase"/>
    <property type="match status" value="1"/>
</dbReference>
<dbReference type="Gene3D" id="3.20.20.70">
    <property type="entry name" value="Aldolase class I"/>
    <property type="match status" value="1"/>
</dbReference>
<dbReference type="HAMAP" id="MF_00443">
    <property type="entry name" value="ThiG"/>
    <property type="match status" value="1"/>
</dbReference>
<dbReference type="InterPro" id="IPR013785">
    <property type="entry name" value="Aldolase_TIM"/>
</dbReference>
<dbReference type="InterPro" id="IPR033983">
    <property type="entry name" value="Thiazole_synthase_ThiG"/>
</dbReference>
<dbReference type="InterPro" id="IPR008867">
    <property type="entry name" value="ThiG"/>
</dbReference>
<dbReference type="PANTHER" id="PTHR34266">
    <property type="entry name" value="THIAZOLE SYNTHASE"/>
    <property type="match status" value="1"/>
</dbReference>
<dbReference type="PANTHER" id="PTHR34266:SF2">
    <property type="entry name" value="THIAZOLE SYNTHASE"/>
    <property type="match status" value="1"/>
</dbReference>
<dbReference type="Pfam" id="PF05690">
    <property type="entry name" value="ThiG"/>
    <property type="match status" value="1"/>
</dbReference>
<dbReference type="SUPFAM" id="SSF110399">
    <property type="entry name" value="ThiG-like"/>
    <property type="match status" value="1"/>
</dbReference>
<protein>
    <recommendedName>
        <fullName evidence="1">Thiazole synthase</fullName>
        <ecNumber evidence="1">2.8.1.10</ecNumber>
    </recommendedName>
</protein>
<organism>
    <name type="scientific">Baumannia cicadellinicola subsp. Homalodisca coagulata</name>
    <dbReference type="NCBI Taxonomy" id="374463"/>
    <lineage>
        <taxon>Bacteria</taxon>
        <taxon>Pseudomonadati</taxon>
        <taxon>Pseudomonadota</taxon>
        <taxon>Gammaproteobacteria</taxon>
        <taxon>Candidatus Palibaumannia</taxon>
    </lineage>
</organism>
<proteinExistence type="inferred from homology"/>
<evidence type="ECO:0000255" key="1">
    <source>
        <dbReference type="HAMAP-Rule" id="MF_00443"/>
    </source>
</evidence>